<proteinExistence type="evidence at protein level"/>
<evidence type="ECO:0000269" key="1">
    <source>
    </source>
</evidence>
<evidence type="ECO:0000305" key="2"/>
<keyword id="KW-0131">Cell cycle</keyword>
<keyword id="KW-0217">Developmental protein</keyword>
<keyword id="KW-0433">Leucine-rich repeat</keyword>
<keyword id="KW-0539">Nucleus</keyword>
<keyword id="KW-1185">Reference proteome</keyword>
<keyword id="KW-0677">Repeat</keyword>
<keyword id="KW-0833">Ubl conjugation pathway</keyword>
<comment type="function">
    <text evidence="1">Essential protein for male fertility. Component of the SCF(ASK-cullin-F-box) E3 ubiquitin ligase complex SCF(FBL17), which mediates the ubiquitination and subsequent proteasomal degradation of target proteins. Enables the switch in cell cycle control leading to male germ cell lineage formation from microspores after meiosis. Targets CDKA-1 inhibitors the degradation specifically in male germ cells (e.g. KRP6 and KRP7) and thus enables CDKA-1 activation and germ cell S-phase progression. Promotes twin sperm cell production and double fertilization.</text>
</comment>
<comment type="pathway">
    <text>Protein modification; protein ubiquitination.</text>
</comment>
<comment type="subunit">
    <text evidence="1">Part of a SCF (ASK-cullin-F-box) protein ligase complex. Interacts with SKP1A/ASK1, KRP4, KRP6 and KRP7.</text>
</comment>
<comment type="interaction">
    <interactant intactId="EBI-2026732">
        <id>Q8W104</id>
    </interactant>
    <interactant intactId="EBI-1253171">
        <id>Q0WNX9</id>
        <label>KRP6</label>
    </interactant>
    <organismsDiffer>false</organismsDiffer>
    <experiments>3</experiments>
</comment>
<comment type="interaction">
    <interactant intactId="EBI-2026732">
        <id>Q8W104</id>
    </interactant>
    <interactant intactId="EBI-1773344">
        <id>Q94CL9</id>
        <label>KRP7</label>
    </interactant>
    <organismsDiffer>false</organismsDiffer>
    <experiments>4</experiments>
</comment>
<comment type="subcellular location">
    <subcellularLocation>
        <location evidence="1">Nucleus</location>
    </subcellularLocation>
    <text>Confined to the male germ cell nucleus of early to mid bicellular pollen.</text>
</comment>
<comment type="tissue specificity">
    <text evidence="1">Expressed in developing pollen.</text>
</comment>
<comment type="developmental stage">
    <text evidence="1">Expressed transiently in the male germ line after asymmetric division. Present in maturing pollen with highest levels in bicellular pollen.</text>
</comment>
<comment type="domain">
    <text>The F-box is necessary for the interaction with ASK proteins.</text>
</comment>
<comment type="disruption phenotype">
    <text evidence="1">Stabilization of KRP6 and inhibition of germ cell cycle progression leading to male sterility.</text>
</comment>
<comment type="sequence caution" evidence="2">
    <conflict type="erroneous gene model prediction">
        <sequence resource="EMBL-CDS" id="CAB77585"/>
    </conflict>
</comment>
<accession>Q8W104</accession>
<accession>Q9M1T4</accession>
<name>FBL17_ARATH</name>
<organism>
    <name type="scientific">Arabidopsis thaliana</name>
    <name type="common">Mouse-ear cress</name>
    <dbReference type="NCBI Taxonomy" id="3702"/>
    <lineage>
        <taxon>Eukaryota</taxon>
        <taxon>Viridiplantae</taxon>
        <taxon>Streptophyta</taxon>
        <taxon>Embryophyta</taxon>
        <taxon>Tracheophyta</taxon>
        <taxon>Spermatophyta</taxon>
        <taxon>Magnoliopsida</taxon>
        <taxon>eudicotyledons</taxon>
        <taxon>Gunneridae</taxon>
        <taxon>Pentapetalae</taxon>
        <taxon>rosids</taxon>
        <taxon>malvids</taxon>
        <taxon>Brassicales</taxon>
        <taxon>Brassicaceae</taxon>
        <taxon>Camelineae</taxon>
        <taxon>Arabidopsis</taxon>
    </lineage>
</organism>
<protein>
    <recommendedName>
        <fullName>F-box/LRR-repeat protein 17</fullName>
    </recommendedName>
    <alternativeName>
        <fullName>F-box-like protein 17</fullName>
    </alternativeName>
</protein>
<reference key="1">
    <citation type="journal article" date="2000" name="Nature">
        <title>Sequence and analysis of chromosome 3 of the plant Arabidopsis thaliana.</title>
        <authorList>
            <person name="Salanoubat M."/>
            <person name="Lemcke K."/>
            <person name="Rieger M."/>
            <person name="Ansorge W."/>
            <person name="Unseld M."/>
            <person name="Fartmann B."/>
            <person name="Valle G."/>
            <person name="Bloecker H."/>
            <person name="Perez-Alonso M."/>
            <person name="Obermaier B."/>
            <person name="Delseny M."/>
            <person name="Boutry M."/>
            <person name="Grivell L.A."/>
            <person name="Mache R."/>
            <person name="Puigdomenech P."/>
            <person name="De Simone V."/>
            <person name="Choisne N."/>
            <person name="Artiguenave F."/>
            <person name="Robert C."/>
            <person name="Brottier P."/>
            <person name="Wincker P."/>
            <person name="Cattolico L."/>
            <person name="Weissenbach J."/>
            <person name="Saurin W."/>
            <person name="Quetier F."/>
            <person name="Schaefer M."/>
            <person name="Mueller-Auer S."/>
            <person name="Gabel C."/>
            <person name="Fuchs M."/>
            <person name="Benes V."/>
            <person name="Wurmbach E."/>
            <person name="Drzonek H."/>
            <person name="Erfle H."/>
            <person name="Jordan N."/>
            <person name="Bangert S."/>
            <person name="Wiedelmann R."/>
            <person name="Kranz H."/>
            <person name="Voss H."/>
            <person name="Holland R."/>
            <person name="Brandt P."/>
            <person name="Nyakatura G."/>
            <person name="Vezzi A."/>
            <person name="D'Angelo M."/>
            <person name="Pallavicini A."/>
            <person name="Toppo S."/>
            <person name="Simionati B."/>
            <person name="Conrad A."/>
            <person name="Hornischer K."/>
            <person name="Kauer G."/>
            <person name="Loehnert T.-H."/>
            <person name="Nordsiek G."/>
            <person name="Reichelt J."/>
            <person name="Scharfe M."/>
            <person name="Schoen O."/>
            <person name="Bargues M."/>
            <person name="Terol J."/>
            <person name="Climent J."/>
            <person name="Navarro P."/>
            <person name="Collado C."/>
            <person name="Perez-Perez A."/>
            <person name="Ottenwaelder B."/>
            <person name="Duchemin D."/>
            <person name="Cooke R."/>
            <person name="Laudie M."/>
            <person name="Berger-Llauro C."/>
            <person name="Purnelle B."/>
            <person name="Masuy D."/>
            <person name="de Haan M."/>
            <person name="Maarse A.C."/>
            <person name="Alcaraz J.-P."/>
            <person name="Cottet A."/>
            <person name="Casacuberta E."/>
            <person name="Monfort A."/>
            <person name="Argiriou A."/>
            <person name="Flores M."/>
            <person name="Liguori R."/>
            <person name="Vitale D."/>
            <person name="Mannhaupt G."/>
            <person name="Haase D."/>
            <person name="Schoof H."/>
            <person name="Rudd S."/>
            <person name="Zaccaria P."/>
            <person name="Mewes H.-W."/>
            <person name="Mayer K.F.X."/>
            <person name="Kaul S."/>
            <person name="Town C.D."/>
            <person name="Koo H.L."/>
            <person name="Tallon L.J."/>
            <person name="Jenkins J."/>
            <person name="Rooney T."/>
            <person name="Rizzo M."/>
            <person name="Walts A."/>
            <person name="Utterback T."/>
            <person name="Fujii C.Y."/>
            <person name="Shea T.P."/>
            <person name="Creasy T.H."/>
            <person name="Haas B."/>
            <person name="Maiti R."/>
            <person name="Wu D."/>
            <person name="Peterson J."/>
            <person name="Van Aken S."/>
            <person name="Pai G."/>
            <person name="Militscher J."/>
            <person name="Sellers P."/>
            <person name="Gill J.E."/>
            <person name="Feldblyum T.V."/>
            <person name="Preuss D."/>
            <person name="Lin X."/>
            <person name="Nierman W.C."/>
            <person name="Salzberg S.L."/>
            <person name="White O."/>
            <person name="Venter J.C."/>
            <person name="Fraser C.M."/>
            <person name="Kaneko T."/>
            <person name="Nakamura Y."/>
            <person name="Sato S."/>
            <person name="Kato T."/>
            <person name="Asamizu E."/>
            <person name="Sasamoto S."/>
            <person name="Kimura T."/>
            <person name="Idesawa K."/>
            <person name="Kawashima K."/>
            <person name="Kishida Y."/>
            <person name="Kiyokawa C."/>
            <person name="Kohara M."/>
            <person name="Matsumoto M."/>
            <person name="Matsuno A."/>
            <person name="Muraki A."/>
            <person name="Nakayama S."/>
            <person name="Nakazaki N."/>
            <person name="Shinpo S."/>
            <person name="Takeuchi C."/>
            <person name="Wada T."/>
            <person name="Watanabe A."/>
            <person name="Yamada M."/>
            <person name="Yasuda M."/>
            <person name="Tabata S."/>
        </authorList>
    </citation>
    <scope>NUCLEOTIDE SEQUENCE [LARGE SCALE GENOMIC DNA]</scope>
    <source>
        <strain>cv. Columbia</strain>
    </source>
</reference>
<reference key="2">
    <citation type="journal article" date="2017" name="Plant J.">
        <title>Araport11: a complete reannotation of the Arabidopsis thaliana reference genome.</title>
        <authorList>
            <person name="Cheng C.Y."/>
            <person name="Krishnakumar V."/>
            <person name="Chan A.P."/>
            <person name="Thibaud-Nissen F."/>
            <person name="Schobel S."/>
            <person name="Town C.D."/>
        </authorList>
    </citation>
    <scope>GENOME REANNOTATION</scope>
    <source>
        <strain>cv. Columbia</strain>
    </source>
</reference>
<reference key="3">
    <citation type="journal article" date="2003" name="Science">
        <title>Empirical analysis of transcriptional activity in the Arabidopsis genome.</title>
        <authorList>
            <person name="Yamada K."/>
            <person name="Lim J."/>
            <person name="Dale J.M."/>
            <person name="Chen H."/>
            <person name="Shinn P."/>
            <person name="Palm C.J."/>
            <person name="Southwick A.M."/>
            <person name="Wu H.C."/>
            <person name="Kim C.J."/>
            <person name="Nguyen M."/>
            <person name="Pham P.K."/>
            <person name="Cheuk R.F."/>
            <person name="Karlin-Newmann G."/>
            <person name="Liu S.X."/>
            <person name="Lam B."/>
            <person name="Sakano H."/>
            <person name="Wu T."/>
            <person name="Yu G."/>
            <person name="Miranda M."/>
            <person name="Quach H.L."/>
            <person name="Tripp M."/>
            <person name="Chang C.H."/>
            <person name="Lee J.M."/>
            <person name="Toriumi M.J."/>
            <person name="Chan M.M."/>
            <person name="Tang C.C."/>
            <person name="Onodera C.S."/>
            <person name="Deng J.M."/>
            <person name="Akiyama K."/>
            <person name="Ansari Y."/>
            <person name="Arakawa T."/>
            <person name="Banh J."/>
            <person name="Banno F."/>
            <person name="Bowser L."/>
            <person name="Brooks S.Y."/>
            <person name="Carninci P."/>
            <person name="Chao Q."/>
            <person name="Choy N."/>
            <person name="Enju A."/>
            <person name="Goldsmith A.D."/>
            <person name="Gurjal M."/>
            <person name="Hansen N.F."/>
            <person name="Hayashizaki Y."/>
            <person name="Johnson-Hopson C."/>
            <person name="Hsuan V.W."/>
            <person name="Iida K."/>
            <person name="Karnes M."/>
            <person name="Khan S."/>
            <person name="Koesema E."/>
            <person name="Ishida J."/>
            <person name="Jiang P.X."/>
            <person name="Jones T."/>
            <person name="Kawai J."/>
            <person name="Kamiya A."/>
            <person name="Meyers C."/>
            <person name="Nakajima M."/>
            <person name="Narusaka M."/>
            <person name="Seki M."/>
            <person name="Sakurai T."/>
            <person name="Satou M."/>
            <person name="Tamse R."/>
            <person name="Vaysberg M."/>
            <person name="Wallender E.K."/>
            <person name="Wong C."/>
            <person name="Yamamura Y."/>
            <person name="Yuan S."/>
            <person name="Shinozaki K."/>
            <person name="Davis R.W."/>
            <person name="Theologis A."/>
            <person name="Ecker J.R."/>
        </authorList>
    </citation>
    <scope>NUCLEOTIDE SEQUENCE [LARGE SCALE MRNA]</scope>
    <source>
        <strain>cv. Columbia</strain>
    </source>
</reference>
<reference key="4">
    <citation type="journal article" date="2000" name="Trends Plant Sci.">
        <title>F-box proteins in Arabidopsis.</title>
        <authorList>
            <person name="Xiao W."/>
            <person name="Jang J.-C."/>
        </authorList>
    </citation>
    <scope>GENE FAMILY</scope>
    <scope>NOMENCLATURE</scope>
</reference>
<reference key="5">
    <citation type="journal article" date="2008" name="Nature">
        <title>Control of plant germline proliferation by SCF(FBL17) degradation of cell cycle inhibitors.</title>
        <authorList>
            <person name="Kim H.J."/>
            <person name="Oh S.A."/>
            <person name="Brownfield L."/>
            <person name="Hong S.H."/>
            <person name="Ryu H."/>
            <person name="Hwang I."/>
            <person name="Twell D."/>
            <person name="Nam H.G."/>
        </authorList>
    </citation>
    <scope>FUNCTION</scope>
    <scope>DISRUPTION PHENOTYPE</scope>
    <scope>TISSUE SPECIFICITY</scope>
    <scope>DEVELOPMENTAL STAGE</scope>
    <scope>SUBCELLULAR LOCATION</scope>
    <scope>INTERACTION WITH SKP1A/ASK1; KRP4; KRP6 AND KRP7</scope>
</reference>
<gene>
    <name type="primary">FBL17</name>
    <name type="ordered locus">At3g54650</name>
    <name type="ORF">T5N23.10</name>
</gene>
<sequence>MQPQPHISPNTATAAISAALESQRSRKNRGSYNCGRCGQPKKGHVCLLTAPPDIPTTPIASEPVSCISAAASSSRSTVLSLTAAPSSRQTFTHLRRALSFDDVDARNSLDESDLDAASMDLDLQLDTDIVQPGRFHAVGLWEVLKRLPPSSLLMAARVCKGWRETSRKMWKAAEELRIRVPERAQIGYIGSLLQKCPRLIRLSLKIESDFDATTLACIAFSCPNLEVLEITTSGAAVNRISGDELSRFVANKRGLTSLKMEGCSNLGGFSLSSSSLSTLWLSDLHSLSKMIFNCPNLTEISLEFSRQEDDSTDLVTMVDGLGRTCTRLQNIHIASLKLSHTVVLSLTAVNFRYLRMLSLVLGINITDASVAAISSGYKNLELLDLSGSSITDTGLGMICDVLPDTLSKLLVALCPNITSSGIQFATAQLPLLELMDCGMTVSDPNSDNPTFVENPSPHKTPGYNQKMFIKHKRLKKLSLWGCSSLDALFLNCPELMDLNLNLCSNLHPESLVLQCPKLQLVYASGCQGLLTGAIRKQVSENFSAGENHMPRKRLADASKRIQALPSLYQETREDGIYAGKRRKLEKEMCTIIH</sequence>
<feature type="chain" id="PRO_0000272257" description="F-box/LRR-repeat protein 17">
    <location>
        <begin position="1"/>
        <end position="593"/>
    </location>
</feature>
<feature type="domain" description="F-box">
    <location>
        <begin position="120"/>
        <end position="177"/>
    </location>
</feature>
<feature type="repeat" description="LRR 1">
    <location>
        <begin position="178"/>
        <end position="206"/>
    </location>
</feature>
<feature type="repeat" description="LRR 2">
    <location>
        <begin position="207"/>
        <end position="232"/>
    </location>
</feature>
<feature type="repeat" description="LRR 3">
    <location>
        <begin position="237"/>
        <end position="262"/>
    </location>
</feature>
<feature type="repeat" description="LRR 4">
    <location>
        <begin position="276"/>
        <end position="304"/>
    </location>
</feature>
<feature type="repeat" description="LRR 5">
    <location>
        <begin position="335"/>
        <end position="361"/>
    </location>
</feature>
<feature type="repeat" description="LRR 6">
    <location>
        <begin position="362"/>
        <end position="387"/>
    </location>
</feature>
<feature type="repeat" description="LRR 7">
    <location>
        <begin position="414"/>
        <end position="439"/>
    </location>
</feature>
<feature type="repeat" description="LRR 8">
    <location>
        <begin position="477"/>
        <end position="502"/>
    </location>
</feature>
<feature type="repeat" description="LRR 9">
    <location>
        <begin position="503"/>
        <end position="525"/>
    </location>
</feature>
<dbReference type="EMBL" id="AL138650">
    <property type="protein sequence ID" value="CAB77585.1"/>
    <property type="status" value="ALT_SEQ"/>
    <property type="molecule type" value="Genomic_DNA"/>
</dbReference>
<dbReference type="EMBL" id="CP002686">
    <property type="protein sequence ID" value="AEE79261.1"/>
    <property type="molecule type" value="Genomic_DNA"/>
</dbReference>
<dbReference type="EMBL" id="AF462827">
    <property type="protein sequence ID" value="AAL58916.1"/>
    <property type="molecule type" value="mRNA"/>
</dbReference>
<dbReference type="EMBL" id="AY142006">
    <property type="protein sequence ID" value="AAM98270.1"/>
    <property type="molecule type" value="mRNA"/>
</dbReference>
<dbReference type="PIR" id="T47624">
    <property type="entry name" value="T47624"/>
</dbReference>
<dbReference type="RefSeq" id="NP_567005.2">
    <property type="nucleotide sequence ID" value="NM_115322.4"/>
</dbReference>
<dbReference type="SMR" id="Q8W104"/>
<dbReference type="BioGRID" id="9946">
    <property type="interactions" value="8"/>
</dbReference>
<dbReference type="DIP" id="DIP-46993N"/>
<dbReference type="FunCoup" id="Q8W104">
    <property type="interactions" value="2392"/>
</dbReference>
<dbReference type="IntAct" id="Q8W104">
    <property type="interactions" value="9"/>
</dbReference>
<dbReference type="STRING" id="3702.Q8W104"/>
<dbReference type="iPTMnet" id="Q8W104"/>
<dbReference type="PaxDb" id="3702-AT3G54650.1"/>
<dbReference type="ProteomicsDB" id="222500"/>
<dbReference type="EnsemblPlants" id="AT3G54650.1">
    <property type="protein sequence ID" value="AT3G54650.1"/>
    <property type="gene ID" value="AT3G54650"/>
</dbReference>
<dbReference type="GeneID" id="824630"/>
<dbReference type="Gramene" id="AT3G54650.1">
    <property type="protein sequence ID" value="AT3G54650.1"/>
    <property type="gene ID" value="AT3G54650"/>
</dbReference>
<dbReference type="KEGG" id="ath:AT3G54650"/>
<dbReference type="Araport" id="AT3G54650"/>
<dbReference type="TAIR" id="AT3G54650">
    <property type="gene designation" value="FBL17"/>
</dbReference>
<dbReference type="eggNOG" id="ENOG502QR17">
    <property type="taxonomic scope" value="Eukaryota"/>
</dbReference>
<dbReference type="HOGENOM" id="CLU_019957_1_0_1"/>
<dbReference type="InParanoid" id="Q8W104"/>
<dbReference type="OMA" id="GWRETTR"/>
<dbReference type="PhylomeDB" id="Q8W104"/>
<dbReference type="UniPathway" id="UPA00143"/>
<dbReference type="PRO" id="PR:Q8W104"/>
<dbReference type="Proteomes" id="UP000006548">
    <property type="component" value="Chromosome 3"/>
</dbReference>
<dbReference type="ExpressionAtlas" id="Q8W104">
    <property type="expression patterns" value="baseline and differential"/>
</dbReference>
<dbReference type="GO" id="GO:0001673">
    <property type="term" value="C:male germ cell nucleus"/>
    <property type="evidence" value="ECO:0000314"/>
    <property type="project" value="UniProtKB"/>
</dbReference>
<dbReference type="GO" id="GO:0005634">
    <property type="term" value="C:nucleus"/>
    <property type="evidence" value="ECO:0000314"/>
    <property type="project" value="TAIR"/>
</dbReference>
<dbReference type="GO" id="GO:0019005">
    <property type="term" value="C:SCF ubiquitin ligase complex"/>
    <property type="evidence" value="ECO:0000314"/>
    <property type="project" value="UniProtKB"/>
</dbReference>
<dbReference type="GO" id="GO:0035861">
    <property type="term" value="C:site of double-strand break"/>
    <property type="evidence" value="ECO:0000314"/>
    <property type="project" value="TAIR"/>
</dbReference>
<dbReference type="GO" id="GO:0006974">
    <property type="term" value="P:DNA damage response"/>
    <property type="evidence" value="ECO:0000315"/>
    <property type="project" value="TAIR"/>
</dbReference>
<dbReference type="GO" id="GO:0009793">
    <property type="term" value="P:embryo development ending in seed dormancy"/>
    <property type="evidence" value="ECO:0000315"/>
    <property type="project" value="TAIR"/>
</dbReference>
<dbReference type="GO" id="GO:0055047">
    <property type="term" value="P:generative cell mitosis"/>
    <property type="evidence" value="ECO:0000315"/>
    <property type="project" value="TAIR"/>
</dbReference>
<dbReference type="GO" id="GO:0009555">
    <property type="term" value="P:pollen development"/>
    <property type="evidence" value="ECO:0000315"/>
    <property type="project" value="TAIR"/>
</dbReference>
<dbReference type="GO" id="GO:0016567">
    <property type="term" value="P:protein ubiquitination"/>
    <property type="evidence" value="ECO:0007669"/>
    <property type="project" value="UniProtKB-UniPathway"/>
</dbReference>
<dbReference type="GO" id="GO:0051302">
    <property type="term" value="P:regulation of cell division"/>
    <property type="evidence" value="ECO:0000315"/>
    <property type="project" value="TAIR"/>
</dbReference>
<dbReference type="GO" id="GO:0031146">
    <property type="term" value="P:SCF-dependent proteasomal ubiquitin-dependent protein catabolic process"/>
    <property type="evidence" value="ECO:0000314"/>
    <property type="project" value="UniProtKB"/>
</dbReference>
<dbReference type="GO" id="GO:0048316">
    <property type="term" value="P:seed development"/>
    <property type="evidence" value="ECO:0000315"/>
    <property type="project" value="TAIR"/>
</dbReference>
<dbReference type="FunFam" id="3.80.10.10:FF:000504">
    <property type="entry name" value="F-box family protein"/>
    <property type="match status" value="1"/>
</dbReference>
<dbReference type="FunFam" id="3.80.10.10:FF:000597">
    <property type="entry name" value="F-box/LRR-repeat protein 17"/>
    <property type="match status" value="1"/>
</dbReference>
<dbReference type="Gene3D" id="3.80.10.10">
    <property type="entry name" value="Ribonuclease Inhibitor"/>
    <property type="match status" value="3"/>
</dbReference>
<dbReference type="InterPro" id="IPR036047">
    <property type="entry name" value="F-box-like_dom_sf"/>
</dbReference>
<dbReference type="InterPro" id="IPR001810">
    <property type="entry name" value="F-box_dom"/>
</dbReference>
<dbReference type="InterPro" id="IPR050648">
    <property type="entry name" value="F-box_LRR-repeat"/>
</dbReference>
<dbReference type="InterPro" id="IPR006553">
    <property type="entry name" value="Leu-rich_rpt_Cys-con_subtyp"/>
</dbReference>
<dbReference type="InterPro" id="IPR032675">
    <property type="entry name" value="LRR_dom_sf"/>
</dbReference>
<dbReference type="PANTHER" id="PTHR13382">
    <property type="entry name" value="MITOCHONDRIAL ATP SYNTHASE COUPLING FACTOR B"/>
    <property type="match status" value="1"/>
</dbReference>
<dbReference type="PANTHER" id="PTHR13382:SF21">
    <property type="entry name" value="OS12G0601000 PROTEIN"/>
    <property type="match status" value="1"/>
</dbReference>
<dbReference type="Pfam" id="PF00646">
    <property type="entry name" value="F-box"/>
    <property type="match status" value="1"/>
</dbReference>
<dbReference type="SMART" id="SM00367">
    <property type="entry name" value="LRR_CC"/>
    <property type="match status" value="5"/>
</dbReference>
<dbReference type="SUPFAM" id="SSF81383">
    <property type="entry name" value="F-box domain"/>
    <property type="match status" value="1"/>
</dbReference>
<dbReference type="SUPFAM" id="SSF52047">
    <property type="entry name" value="RNI-like"/>
    <property type="match status" value="2"/>
</dbReference>